<keyword id="KW-1003">Cell membrane</keyword>
<keyword id="KW-0472">Membrane</keyword>
<keyword id="KW-1185">Reference proteome</keyword>
<keyword id="KW-0732">Signal</keyword>
<keyword id="KW-0812">Transmembrane</keyword>
<keyword id="KW-1133">Transmembrane helix</keyword>
<feature type="signal peptide" evidence="1">
    <location>
        <begin position="1"/>
        <end position="24"/>
    </location>
</feature>
<feature type="chain" id="PRO_0000360189" description="Uncharacterized protein YosU">
    <location>
        <begin position="25"/>
        <end position="81"/>
    </location>
</feature>
<feature type="topological domain" description="Extracellular" evidence="1">
    <location>
        <begin position="25"/>
        <end position="28"/>
    </location>
</feature>
<feature type="transmembrane region" description="Helical" evidence="1">
    <location>
        <begin position="29"/>
        <end position="49"/>
    </location>
</feature>
<feature type="topological domain" description="Cytoplasmic" evidence="1">
    <location>
        <begin position="50"/>
        <end position="81"/>
    </location>
</feature>
<name>YOSU_BACSU</name>
<sequence length="81" mass="9356">MRKILKIVSLLILLLLLVYSFFSPNSQLFVFVQLIIIAFLIGFGINCFVKKERYQGTLYFVIAICNITINLDKINELIQSI</sequence>
<proteinExistence type="inferred from homology"/>
<reference key="1">
    <citation type="journal article" date="1997" name="Nature">
        <title>The complete genome sequence of the Gram-positive bacterium Bacillus subtilis.</title>
        <authorList>
            <person name="Kunst F."/>
            <person name="Ogasawara N."/>
            <person name="Moszer I."/>
            <person name="Albertini A.M."/>
            <person name="Alloni G."/>
            <person name="Azevedo V."/>
            <person name="Bertero M.G."/>
            <person name="Bessieres P."/>
            <person name="Bolotin A."/>
            <person name="Borchert S."/>
            <person name="Borriss R."/>
            <person name="Boursier L."/>
            <person name="Brans A."/>
            <person name="Braun M."/>
            <person name="Brignell S.C."/>
            <person name="Bron S."/>
            <person name="Brouillet S."/>
            <person name="Bruschi C.V."/>
            <person name="Caldwell B."/>
            <person name="Capuano V."/>
            <person name="Carter N.M."/>
            <person name="Choi S.-K."/>
            <person name="Codani J.-J."/>
            <person name="Connerton I.F."/>
            <person name="Cummings N.J."/>
            <person name="Daniel R.A."/>
            <person name="Denizot F."/>
            <person name="Devine K.M."/>
            <person name="Duesterhoeft A."/>
            <person name="Ehrlich S.D."/>
            <person name="Emmerson P.T."/>
            <person name="Entian K.-D."/>
            <person name="Errington J."/>
            <person name="Fabret C."/>
            <person name="Ferrari E."/>
            <person name="Foulger D."/>
            <person name="Fritz C."/>
            <person name="Fujita M."/>
            <person name="Fujita Y."/>
            <person name="Fuma S."/>
            <person name="Galizzi A."/>
            <person name="Galleron N."/>
            <person name="Ghim S.-Y."/>
            <person name="Glaser P."/>
            <person name="Goffeau A."/>
            <person name="Golightly E.J."/>
            <person name="Grandi G."/>
            <person name="Guiseppi G."/>
            <person name="Guy B.J."/>
            <person name="Haga K."/>
            <person name="Haiech J."/>
            <person name="Harwood C.R."/>
            <person name="Henaut A."/>
            <person name="Hilbert H."/>
            <person name="Holsappel S."/>
            <person name="Hosono S."/>
            <person name="Hullo M.-F."/>
            <person name="Itaya M."/>
            <person name="Jones L.-M."/>
            <person name="Joris B."/>
            <person name="Karamata D."/>
            <person name="Kasahara Y."/>
            <person name="Klaerr-Blanchard M."/>
            <person name="Klein C."/>
            <person name="Kobayashi Y."/>
            <person name="Koetter P."/>
            <person name="Koningstein G."/>
            <person name="Krogh S."/>
            <person name="Kumano M."/>
            <person name="Kurita K."/>
            <person name="Lapidus A."/>
            <person name="Lardinois S."/>
            <person name="Lauber J."/>
            <person name="Lazarevic V."/>
            <person name="Lee S.-M."/>
            <person name="Levine A."/>
            <person name="Liu H."/>
            <person name="Masuda S."/>
            <person name="Mauel C."/>
            <person name="Medigue C."/>
            <person name="Medina N."/>
            <person name="Mellado R.P."/>
            <person name="Mizuno M."/>
            <person name="Moestl D."/>
            <person name="Nakai S."/>
            <person name="Noback M."/>
            <person name="Noone D."/>
            <person name="O'Reilly M."/>
            <person name="Ogawa K."/>
            <person name="Ogiwara A."/>
            <person name="Oudega B."/>
            <person name="Park S.-H."/>
            <person name="Parro V."/>
            <person name="Pohl T.M."/>
            <person name="Portetelle D."/>
            <person name="Porwollik S."/>
            <person name="Prescott A.M."/>
            <person name="Presecan E."/>
            <person name="Pujic P."/>
            <person name="Purnelle B."/>
            <person name="Rapoport G."/>
            <person name="Rey M."/>
            <person name="Reynolds S."/>
            <person name="Rieger M."/>
            <person name="Rivolta C."/>
            <person name="Rocha E."/>
            <person name="Roche B."/>
            <person name="Rose M."/>
            <person name="Sadaie Y."/>
            <person name="Sato T."/>
            <person name="Scanlan E."/>
            <person name="Schleich S."/>
            <person name="Schroeter R."/>
            <person name="Scoffone F."/>
            <person name="Sekiguchi J."/>
            <person name="Sekowska A."/>
            <person name="Seror S.J."/>
            <person name="Serror P."/>
            <person name="Shin B.-S."/>
            <person name="Soldo B."/>
            <person name="Sorokin A."/>
            <person name="Tacconi E."/>
            <person name="Takagi T."/>
            <person name="Takahashi H."/>
            <person name="Takemaru K."/>
            <person name="Takeuchi M."/>
            <person name="Tamakoshi A."/>
            <person name="Tanaka T."/>
            <person name="Terpstra P."/>
            <person name="Tognoni A."/>
            <person name="Tosato V."/>
            <person name="Uchiyama S."/>
            <person name="Vandenbol M."/>
            <person name="Vannier F."/>
            <person name="Vassarotti A."/>
            <person name="Viari A."/>
            <person name="Wambutt R."/>
            <person name="Wedler E."/>
            <person name="Wedler H."/>
            <person name="Weitzenegger T."/>
            <person name="Winters P."/>
            <person name="Wipat A."/>
            <person name="Yamamoto H."/>
            <person name="Yamane K."/>
            <person name="Yasumoto K."/>
            <person name="Yata K."/>
            <person name="Yoshida K."/>
            <person name="Yoshikawa H.-F."/>
            <person name="Zumstein E."/>
            <person name="Yoshikawa H."/>
            <person name="Danchin A."/>
        </authorList>
    </citation>
    <scope>NUCLEOTIDE SEQUENCE [LARGE SCALE GENOMIC DNA]</scope>
    <source>
        <strain>168</strain>
    </source>
</reference>
<accession>O31873</accession>
<dbReference type="EMBL" id="AL009126">
    <property type="protein sequence ID" value="CAB13891.1"/>
    <property type="molecule type" value="Genomic_DNA"/>
</dbReference>
<dbReference type="RefSeq" id="NP_389881.1">
    <property type="nucleotide sequence ID" value="NC_000964.3"/>
</dbReference>
<dbReference type="RefSeq" id="WP_009967458.1">
    <property type="nucleotide sequence ID" value="NZ_OZ025638.1"/>
</dbReference>
<dbReference type="SMR" id="O31873"/>
<dbReference type="FunCoup" id="O31873">
    <property type="interactions" value="8"/>
</dbReference>
<dbReference type="STRING" id="224308.BSU20000"/>
<dbReference type="PaxDb" id="224308-BSU20000"/>
<dbReference type="EnsemblBacteria" id="CAB13891">
    <property type="protein sequence ID" value="CAB13891"/>
    <property type="gene ID" value="BSU_20000"/>
</dbReference>
<dbReference type="GeneID" id="939552"/>
<dbReference type="KEGG" id="bsu:BSU20000"/>
<dbReference type="PATRIC" id="fig|224308.179.peg.2188"/>
<dbReference type="InParanoid" id="O31873"/>
<dbReference type="OrthoDB" id="2941237at2"/>
<dbReference type="BioCyc" id="BSUB:BSU20000-MONOMER"/>
<dbReference type="Proteomes" id="UP000001570">
    <property type="component" value="Chromosome"/>
</dbReference>
<dbReference type="GO" id="GO:0005886">
    <property type="term" value="C:plasma membrane"/>
    <property type="evidence" value="ECO:0007669"/>
    <property type="project" value="UniProtKB-SubCell"/>
</dbReference>
<comment type="subcellular location">
    <subcellularLocation>
        <location evidence="2">Cell membrane</location>
        <topology evidence="2">Single-pass type I membrane protein</topology>
    </subcellularLocation>
</comment>
<protein>
    <recommendedName>
        <fullName>Uncharacterized protein YosU</fullName>
    </recommendedName>
</protein>
<organism>
    <name type="scientific">Bacillus subtilis (strain 168)</name>
    <dbReference type="NCBI Taxonomy" id="224308"/>
    <lineage>
        <taxon>Bacteria</taxon>
        <taxon>Bacillati</taxon>
        <taxon>Bacillota</taxon>
        <taxon>Bacilli</taxon>
        <taxon>Bacillales</taxon>
        <taxon>Bacillaceae</taxon>
        <taxon>Bacillus</taxon>
    </lineage>
</organism>
<gene>
    <name type="primary">yosU</name>
    <name type="ordered locus">BSU20000</name>
</gene>
<evidence type="ECO:0000255" key="1"/>
<evidence type="ECO:0000305" key="2"/>